<reference key="1">
    <citation type="journal article" date="2002" name="J. Bacteriol.">
        <title>Whole-genome comparison of Mycobacterium tuberculosis clinical and laboratory strains.</title>
        <authorList>
            <person name="Fleischmann R.D."/>
            <person name="Alland D."/>
            <person name="Eisen J.A."/>
            <person name="Carpenter L."/>
            <person name="White O."/>
            <person name="Peterson J.D."/>
            <person name="DeBoy R.T."/>
            <person name="Dodson R.J."/>
            <person name="Gwinn M.L."/>
            <person name="Haft D.H."/>
            <person name="Hickey E.K."/>
            <person name="Kolonay J.F."/>
            <person name="Nelson W.C."/>
            <person name="Umayam L.A."/>
            <person name="Ermolaeva M.D."/>
            <person name="Salzberg S.L."/>
            <person name="Delcher A."/>
            <person name="Utterback T.R."/>
            <person name="Weidman J.F."/>
            <person name="Khouri H.M."/>
            <person name="Gill J."/>
            <person name="Mikula A."/>
            <person name="Bishai W."/>
            <person name="Jacobs W.R. Jr."/>
            <person name="Venter J.C."/>
            <person name="Fraser C.M."/>
        </authorList>
    </citation>
    <scope>NUCLEOTIDE SEQUENCE [LARGE SCALE GENOMIC DNA]</scope>
    <source>
        <strain>CDC 1551 / Oshkosh</strain>
    </source>
</reference>
<organism>
    <name type="scientific">Mycobacterium tuberculosis (strain CDC 1551 / Oshkosh)</name>
    <dbReference type="NCBI Taxonomy" id="83331"/>
    <lineage>
        <taxon>Bacteria</taxon>
        <taxon>Bacillati</taxon>
        <taxon>Actinomycetota</taxon>
        <taxon>Actinomycetes</taxon>
        <taxon>Mycobacteriales</taxon>
        <taxon>Mycobacteriaceae</taxon>
        <taxon>Mycobacterium</taxon>
        <taxon>Mycobacterium tuberculosis complex</taxon>
    </lineage>
</organism>
<sequence length="475" mass="50646">MTDADSAVPPRLDEDAISKLELTEVADLIRTRQLTSAEVTESTLRRIERLDPQLKSYAFVMPETALAAARAADADIARGHYEGVLHGVPIGVKDLCYTVDAPTAAGTTIFRDFRPAYDATVVARLRAAGAVIIGKLAMTEGAYLGYHPSLPTPVNPWDPTAWAGVSSSGCGVATAAGLCFGSIGSDTGGSIRFPTSMCGVTGIKPTWGRVSRHGVVELAASYDHVGPITRSAHDAAVLLSVIAGSDIHDPSCSAEPVPDYAADLALTRIPRVGVDWSQTTSFDEDTTAMLADVVKTLDDIGWPVIDVKLPALAPMVAAFGKMRAVETAIAHADTYPARADEYGPIMRAMIDAGHRLAAVEYQTLTERRLEFTRSLRRVFHDVDILLMPSAGIASPTLETMRGLGQDPELTARLAMPTAPFNVSGNPAICLPAGTTARGTPLGVQFIGREFDEHLLVRAGHAFQQVTGYHRRRPPV</sequence>
<accession>P9WQ92</accession>
<accession>L0TF69</accession>
<accession>O50404</accession>
<accession>P63496</accession>
<name>AMI4_MYCTO</name>
<gene>
    <name type="primary">amiD</name>
    <name type="ordered locus">MT3485</name>
</gene>
<keyword id="KW-0378">Hydrolase</keyword>
<keyword id="KW-1185">Reference proteome</keyword>
<comment type="catalytic activity">
    <reaction>
        <text>a monocarboxylic acid amide + H2O = a monocarboxylate + NH4(+)</text>
        <dbReference type="Rhea" id="RHEA:12020"/>
        <dbReference type="ChEBI" id="CHEBI:15377"/>
        <dbReference type="ChEBI" id="CHEBI:28938"/>
        <dbReference type="ChEBI" id="CHEBI:35757"/>
        <dbReference type="ChEBI" id="CHEBI:83628"/>
        <dbReference type="EC" id="3.5.1.4"/>
    </reaction>
</comment>
<comment type="similarity">
    <text evidence="2">Belongs to the amidase family.</text>
</comment>
<proteinExistence type="inferred from homology"/>
<dbReference type="EC" id="3.5.1.4"/>
<dbReference type="EMBL" id="AE000516">
    <property type="protein sequence ID" value="AAK47821.1"/>
    <property type="molecule type" value="Genomic_DNA"/>
</dbReference>
<dbReference type="PIR" id="F70972">
    <property type="entry name" value="F70972"/>
</dbReference>
<dbReference type="RefSeq" id="WP_003417900.1">
    <property type="nucleotide sequence ID" value="NZ_KK341227.1"/>
</dbReference>
<dbReference type="SMR" id="P9WQ92"/>
<dbReference type="KEGG" id="mtc:MT3485"/>
<dbReference type="PATRIC" id="fig|83331.31.peg.3742"/>
<dbReference type="HOGENOM" id="CLU_009600_0_3_11"/>
<dbReference type="Proteomes" id="UP000001020">
    <property type="component" value="Chromosome"/>
</dbReference>
<dbReference type="GO" id="GO:0004040">
    <property type="term" value="F:amidase activity"/>
    <property type="evidence" value="ECO:0007669"/>
    <property type="project" value="UniProtKB-EC"/>
</dbReference>
<dbReference type="Gene3D" id="3.90.1300.10">
    <property type="entry name" value="Amidase signature (AS) domain"/>
    <property type="match status" value="1"/>
</dbReference>
<dbReference type="InterPro" id="IPR000120">
    <property type="entry name" value="Amidase"/>
</dbReference>
<dbReference type="InterPro" id="IPR020556">
    <property type="entry name" value="Amidase_CS"/>
</dbReference>
<dbReference type="InterPro" id="IPR023631">
    <property type="entry name" value="Amidase_dom"/>
</dbReference>
<dbReference type="InterPro" id="IPR036928">
    <property type="entry name" value="AS_sf"/>
</dbReference>
<dbReference type="PANTHER" id="PTHR11895:SF176">
    <property type="entry name" value="AMIDASE AMID-RELATED"/>
    <property type="match status" value="1"/>
</dbReference>
<dbReference type="PANTHER" id="PTHR11895">
    <property type="entry name" value="TRANSAMIDASE"/>
    <property type="match status" value="1"/>
</dbReference>
<dbReference type="Pfam" id="PF01425">
    <property type="entry name" value="Amidase"/>
    <property type="match status" value="1"/>
</dbReference>
<dbReference type="SUPFAM" id="SSF75304">
    <property type="entry name" value="Amidase signature (AS) enzymes"/>
    <property type="match status" value="1"/>
</dbReference>
<dbReference type="PROSITE" id="PS00571">
    <property type="entry name" value="AMIDASES"/>
    <property type="match status" value="1"/>
</dbReference>
<evidence type="ECO:0000250" key="1"/>
<evidence type="ECO:0000305" key="2"/>
<feature type="chain" id="PRO_0000426816" description="Putative amidase AmiD">
    <location>
        <begin position="1"/>
        <end position="475"/>
    </location>
</feature>
<feature type="active site" description="Charge relay system" evidence="1">
    <location>
        <position position="93"/>
    </location>
</feature>
<feature type="active site" description="Charge relay system" evidence="1">
    <location>
        <position position="166"/>
    </location>
</feature>
<feature type="active site" description="Acyl-ester intermediate" evidence="1">
    <location>
        <position position="190"/>
    </location>
</feature>
<protein>
    <recommendedName>
        <fullName>Putative amidase AmiD</fullName>
        <ecNumber>3.5.1.4</ecNumber>
    </recommendedName>
</protein>